<evidence type="ECO:0000269" key="1">
    <source>
    </source>
</evidence>
<evidence type="ECO:0000303" key="2">
    <source>
    </source>
</evidence>
<evidence type="ECO:0000305" key="3"/>
<name>VAPB_RICBR</name>
<dbReference type="EMBL" id="CP000087">
    <property type="protein sequence ID" value="ABE05101.1"/>
    <property type="molecule type" value="Genomic_DNA"/>
</dbReference>
<dbReference type="RefSeq" id="WP_011477679.1">
    <property type="nucleotide sequence ID" value="NC_007940.1"/>
</dbReference>
<dbReference type="SMR" id="Q1RHR3"/>
<dbReference type="KEGG" id="rbe:RBE_1020"/>
<dbReference type="HOGENOM" id="CLU_2384284_0_0_5"/>
<dbReference type="OrthoDB" id="7160395at2"/>
<dbReference type="Proteomes" id="UP000001951">
    <property type="component" value="Chromosome"/>
</dbReference>
<gene>
    <name evidence="3" type="primary">vapB</name>
    <name evidence="2" type="synonym">vapB1</name>
    <name type="ordered locus">RBE_1020</name>
</gene>
<feature type="chain" id="PRO_0000432238" description="Antitoxin VapB">
    <location>
        <begin position="1"/>
        <end position="95"/>
    </location>
</feature>
<keyword id="KW-1277">Toxin-antitoxin system</keyword>
<comment type="function">
    <text evidence="1">Antitoxin component of a type II toxin-antitoxin (TA) system. Partially neutralizes the RNase activity of cognate toxin VapC.</text>
</comment>
<reference key="1">
    <citation type="journal article" date="2006" name="PLoS Genet.">
        <title>Genome sequence of Rickettsia bellii illuminates the role of amoebae in gene exchanges between intracellular pathogens.</title>
        <authorList>
            <person name="Ogata H."/>
            <person name="La Scola B."/>
            <person name="Audic S."/>
            <person name="Renesto P."/>
            <person name="Blanc G."/>
            <person name="Robert C."/>
            <person name="Fournier P.-E."/>
            <person name="Claverie J.-M."/>
            <person name="Raoult D."/>
        </authorList>
    </citation>
    <scope>NUCLEOTIDE SEQUENCE [LARGE SCALE GENOMIC DNA]</scope>
    <source>
        <strain>RML369-C</strain>
    </source>
</reference>
<reference key="2">
    <citation type="journal article" date="2011" name="PLoS ONE">
        <title>Effect of rickettsial toxin VapC on its eukaryotic host.</title>
        <authorList>
            <person name="Audoly G."/>
            <person name="Vincentelli R."/>
            <person name="Edouard S."/>
            <person name="Georgiades K."/>
            <person name="Mediannikov O."/>
            <person name="Gimenez G."/>
            <person name="Socolovschi C."/>
            <person name="Mege J.L."/>
            <person name="Cambillau C."/>
            <person name="Raoult D."/>
        </authorList>
    </citation>
    <scope>FUNCTION</scope>
    <source>
        <strain>RML369-C</strain>
    </source>
</reference>
<proteinExistence type="predicted"/>
<organism>
    <name type="scientific">Rickettsia bellii (strain RML369-C)</name>
    <dbReference type="NCBI Taxonomy" id="336407"/>
    <lineage>
        <taxon>Bacteria</taxon>
        <taxon>Pseudomonadati</taxon>
        <taxon>Pseudomonadota</taxon>
        <taxon>Alphaproteobacteria</taxon>
        <taxon>Rickettsiales</taxon>
        <taxon>Rickettsiaceae</taxon>
        <taxon>Rickettsieae</taxon>
        <taxon>Rickettsia</taxon>
        <taxon>belli group</taxon>
    </lineage>
</organism>
<accession>Q1RHR3</accession>
<protein>
    <recommendedName>
        <fullName evidence="2">Antitoxin VapB</fullName>
    </recommendedName>
</protein>
<sequence>MAQIVKATEAVRSFSDIINRVYYKGESFDIQKGNNIVAQITPVENKSSVKVKNLDELFKNGPHLDPEDAEQFMKDVDDVRRSTRINIEELYRKWD</sequence>